<accession>C1CJ40</accession>
<reference key="1">
    <citation type="journal article" date="2010" name="Genome Biol.">
        <title>Structure and dynamics of the pan-genome of Streptococcus pneumoniae and closely related species.</title>
        <authorList>
            <person name="Donati C."/>
            <person name="Hiller N.L."/>
            <person name="Tettelin H."/>
            <person name="Muzzi A."/>
            <person name="Croucher N.J."/>
            <person name="Angiuoli S.V."/>
            <person name="Oggioni M."/>
            <person name="Dunning Hotopp J.C."/>
            <person name="Hu F.Z."/>
            <person name="Riley D.R."/>
            <person name="Covacci A."/>
            <person name="Mitchell T.J."/>
            <person name="Bentley S.D."/>
            <person name="Kilian M."/>
            <person name="Ehrlich G.D."/>
            <person name="Rappuoli R."/>
            <person name="Moxon E.R."/>
            <person name="Masignani V."/>
        </authorList>
    </citation>
    <scope>NUCLEOTIDE SEQUENCE [LARGE SCALE GENOMIC DNA]</scope>
    <source>
        <strain>P1031</strain>
    </source>
</reference>
<name>RBFA_STRZP</name>
<sequence length="116" mass="13310">MANHFRTDRVGMEIKREVNEILQKKVRDPRVQGVTITDVQMLGDLSVAKVYYTILSNLASDNQKAQIGLEKATGTIKRELGRNLKLYKIPDLTFVKDESIEYGNKIDEMLRNLDKN</sequence>
<comment type="function">
    <text evidence="1">One of several proteins that assist in the late maturation steps of the functional core of the 30S ribosomal subunit. Associates with free 30S ribosomal subunits (but not with 30S subunits that are part of 70S ribosomes or polysomes). Required for efficient processing of 16S rRNA. May interact with the 5'-terminal helix region of 16S rRNA.</text>
</comment>
<comment type="subunit">
    <text evidence="1">Monomer. Binds 30S ribosomal subunits, but not 50S ribosomal subunits or 70S ribosomes.</text>
</comment>
<comment type="subcellular location">
    <subcellularLocation>
        <location evidence="1">Cytoplasm</location>
    </subcellularLocation>
</comment>
<comment type="similarity">
    <text evidence="1">Belongs to the RbfA family.</text>
</comment>
<proteinExistence type="inferred from homology"/>
<organism>
    <name type="scientific">Streptococcus pneumoniae (strain P1031)</name>
    <dbReference type="NCBI Taxonomy" id="488223"/>
    <lineage>
        <taxon>Bacteria</taxon>
        <taxon>Bacillati</taxon>
        <taxon>Bacillota</taxon>
        <taxon>Bacilli</taxon>
        <taxon>Lactobacillales</taxon>
        <taxon>Streptococcaceae</taxon>
        <taxon>Streptococcus</taxon>
    </lineage>
</organism>
<keyword id="KW-0963">Cytoplasm</keyword>
<keyword id="KW-0690">Ribosome biogenesis</keyword>
<evidence type="ECO:0000255" key="1">
    <source>
        <dbReference type="HAMAP-Rule" id="MF_00003"/>
    </source>
</evidence>
<dbReference type="EMBL" id="CP000920">
    <property type="protein sequence ID" value="ACO21478.1"/>
    <property type="molecule type" value="Genomic_DNA"/>
</dbReference>
<dbReference type="RefSeq" id="WP_001273601.1">
    <property type="nucleotide sequence ID" value="NC_012467.1"/>
</dbReference>
<dbReference type="SMR" id="C1CJ40"/>
<dbReference type="GeneID" id="93738448"/>
<dbReference type="KEGG" id="spp:SPP_0574"/>
<dbReference type="HOGENOM" id="CLU_089475_3_0_9"/>
<dbReference type="GO" id="GO:0005829">
    <property type="term" value="C:cytosol"/>
    <property type="evidence" value="ECO:0007669"/>
    <property type="project" value="TreeGrafter"/>
</dbReference>
<dbReference type="GO" id="GO:0043024">
    <property type="term" value="F:ribosomal small subunit binding"/>
    <property type="evidence" value="ECO:0007669"/>
    <property type="project" value="TreeGrafter"/>
</dbReference>
<dbReference type="GO" id="GO:0030490">
    <property type="term" value="P:maturation of SSU-rRNA"/>
    <property type="evidence" value="ECO:0007669"/>
    <property type="project" value="UniProtKB-UniRule"/>
</dbReference>
<dbReference type="FunFam" id="3.30.300.20:FF:000012">
    <property type="entry name" value="Ribosome-binding factor A"/>
    <property type="match status" value="1"/>
</dbReference>
<dbReference type="Gene3D" id="3.30.300.20">
    <property type="match status" value="1"/>
</dbReference>
<dbReference type="HAMAP" id="MF_00003">
    <property type="entry name" value="RbfA"/>
    <property type="match status" value="1"/>
</dbReference>
<dbReference type="InterPro" id="IPR015946">
    <property type="entry name" value="KH_dom-like_a/b"/>
</dbReference>
<dbReference type="InterPro" id="IPR000238">
    <property type="entry name" value="RbfA"/>
</dbReference>
<dbReference type="InterPro" id="IPR023799">
    <property type="entry name" value="RbfA_dom_sf"/>
</dbReference>
<dbReference type="InterPro" id="IPR020053">
    <property type="entry name" value="Ribosome-bd_factorA_CS"/>
</dbReference>
<dbReference type="NCBIfam" id="TIGR00082">
    <property type="entry name" value="rbfA"/>
    <property type="match status" value="1"/>
</dbReference>
<dbReference type="PANTHER" id="PTHR33515">
    <property type="entry name" value="RIBOSOME-BINDING FACTOR A, CHLOROPLASTIC-RELATED"/>
    <property type="match status" value="1"/>
</dbReference>
<dbReference type="PANTHER" id="PTHR33515:SF1">
    <property type="entry name" value="RIBOSOME-BINDING FACTOR A, CHLOROPLASTIC-RELATED"/>
    <property type="match status" value="1"/>
</dbReference>
<dbReference type="Pfam" id="PF02033">
    <property type="entry name" value="RBFA"/>
    <property type="match status" value="1"/>
</dbReference>
<dbReference type="SUPFAM" id="SSF89919">
    <property type="entry name" value="Ribosome-binding factor A, RbfA"/>
    <property type="match status" value="1"/>
</dbReference>
<dbReference type="PROSITE" id="PS01319">
    <property type="entry name" value="RBFA"/>
    <property type="match status" value="1"/>
</dbReference>
<protein>
    <recommendedName>
        <fullName evidence="1">Ribosome-binding factor A</fullName>
    </recommendedName>
</protein>
<gene>
    <name evidence="1" type="primary">rbfA</name>
    <name type="ordered locus">SPP_0574</name>
</gene>
<feature type="chain" id="PRO_1000116220" description="Ribosome-binding factor A">
    <location>
        <begin position="1"/>
        <end position="116"/>
    </location>
</feature>